<evidence type="ECO:0000250" key="1"/>
<evidence type="ECO:0000255" key="2">
    <source>
        <dbReference type="PROSITE-ProRule" id="PRU00037"/>
    </source>
</evidence>
<evidence type="ECO:0000255" key="3">
    <source>
        <dbReference type="PROSITE-ProRule" id="PRU00042"/>
    </source>
</evidence>
<evidence type="ECO:0000256" key="4">
    <source>
        <dbReference type="SAM" id="MobiDB-lite"/>
    </source>
</evidence>
<evidence type="ECO:0000305" key="5"/>
<name>ZBT18_XENLA</name>
<organism>
    <name type="scientific">Xenopus laevis</name>
    <name type="common">African clawed frog</name>
    <dbReference type="NCBI Taxonomy" id="8355"/>
    <lineage>
        <taxon>Eukaryota</taxon>
        <taxon>Metazoa</taxon>
        <taxon>Chordata</taxon>
        <taxon>Craniata</taxon>
        <taxon>Vertebrata</taxon>
        <taxon>Euteleostomi</taxon>
        <taxon>Amphibia</taxon>
        <taxon>Batrachia</taxon>
        <taxon>Anura</taxon>
        <taxon>Pipoidea</taxon>
        <taxon>Pipidae</taxon>
        <taxon>Xenopodinae</taxon>
        <taxon>Xenopus</taxon>
        <taxon>Xenopus</taxon>
    </lineage>
</organism>
<gene>
    <name type="primary">zbtb18</name>
    <name type="synonym">znf238</name>
</gene>
<keyword id="KW-0238">DNA-binding</keyword>
<keyword id="KW-0479">Metal-binding</keyword>
<keyword id="KW-0539">Nucleus</keyword>
<keyword id="KW-1185">Reference proteome</keyword>
<keyword id="KW-0677">Repeat</keyword>
<keyword id="KW-0678">Repressor</keyword>
<keyword id="KW-0804">Transcription</keyword>
<keyword id="KW-0805">Transcription regulation</keyword>
<keyword id="KW-0862">Zinc</keyword>
<keyword id="KW-0863">Zinc-finger</keyword>
<proteinExistence type="evidence at transcript level"/>
<reference key="1">
    <citation type="submission" date="2003-03" db="EMBL/GenBank/DDBJ databases">
        <authorList>
            <consortium name="NIH - Xenopus Gene Collection (XGC) project"/>
        </authorList>
    </citation>
    <scope>NUCLEOTIDE SEQUENCE [LARGE SCALE MRNA]</scope>
    <source>
        <tissue>Embryo</tissue>
    </source>
</reference>
<comment type="function">
    <text evidence="1">Transcriptional repressor that plays a role in various developmental processes. Specifically binds the consensus DNA sequence 5'-[AC]ACATCTG[GT][AC]-3' which contains the E box core, and acts by recruiting chromatin remodeling multiprotein complexes (By similarity).</text>
</comment>
<comment type="subcellular location">
    <subcellularLocation>
        <location evidence="1">Nucleus</location>
    </subcellularLocation>
</comment>
<comment type="similarity">
    <text evidence="5">Belongs to the krueppel C2H2-type zinc-finger protein family. ZBTB18 subfamily.</text>
</comment>
<comment type="sequence caution" evidence="5">
    <conflict type="erroneous initiation">
        <sequence resource="EMBL-CDS" id="AAH48019"/>
    </conflict>
    <text>Extended N-terminus.</text>
</comment>
<protein>
    <recommendedName>
        <fullName>Zinc finger and BTB domain-containing protein 18</fullName>
    </recommendedName>
    <alternativeName>
        <fullName>Zinc finger protein 238</fullName>
    </alternativeName>
</protein>
<accession>Q801P1</accession>
<sequence>MEFPEHSRHLLQCLSEQRHQGFLCDCTVLVGDAHFRAHRAVLASCSMYFHLFYKDQLDKRDIVHLNSDIVTAPAFALLLEFMYEGILQFKGLPIEDVLAAASYLHMYDIVKVCKKKLKEKATTDSTKKEEDTSSFSDKVECLSDGSSHMAGDLPSDEDDVEDEKINILPGKTDLATESRNMWIRLPTESASIPRTVGEAETHTTAAGKTAVSPCSSTGSLSHRSAISMGDSADVDCVLDLSVKSSLSGTETMNNSYLSSQEILRNSLVQVKVEKEATCDKNDIDTTEYDIERNTVKESVSSNIRASYEPVHLAPIREDSVLRELDHDDKASDDDMITLENERVQMEANTDNSLLPYVPNIISPTGQIFMCPLCNKVFPSPHILQIHLSTHFREQEGIRSKPANDVHVPTCSLCGKTFSCMYTLKRHERTHSGEKPYTCTQCGKSFQYSHNLSRHAVVHTREKPHACKWCERRFTQSGDLYRHIRKFHCELVNSLSVKSETLGLPAVRDWTLEDSSQELWK</sequence>
<dbReference type="EMBL" id="BC048019">
    <property type="protein sequence ID" value="AAH48019.1"/>
    <property type="status" value="ALT_INIT"/>
    <property type="molecule type" value="mRNA"/>
</dbReference>
<dbReference type="RefSeq" id="NP_001080059.1">
    <property type="nucleotide sequence ID" value="NM_001086590.1"/>
</dbReference>
<dbReference type="RefSeq" id="XP_018117129.1">
    <property type="nucleotide sequence ID" value="XM_018261640.1"/>
</dbReference>
<dbReference type="SMR" id="Q801P1"/>
<dbReference type="DNASU" id="379751"/>
<dbReference type="GeneID" id="379751"/>
<dbReference type="KEGG" id="xla:379751"/>
<dbReference type="AGR" id="Xenbase:XB-GENE-1003548"/>
<dbReference type="CTD" id="379751"/>
<dbReference type="Xenbase" id="XB-GENE-1003548">
    <property type="gene designation" value="zbtb18.L"/>
</dbReference>
<dbReference type="OrthoDB" id="4748970at2759"/>
<dbReference type="Proteomes" id="UP000186698">
    <property type="component" value="Chromosome 5L"/>
</dbReference>
<dbReference type="Bgee" id="379751">
    <property type="expression patterns" value="Expressed in brain and 19 other cell types or tissues"/>
</dbReference>
<dbReference type="GO" id="GO:0005634">
    <property type="term" value="C:nucleus"/>
    <property type="evidence" value="ECO:0000318"/>
    <property type="project" value="GO_Central"/>
</dbReference>
<dbReference type="GO" id="GO:0003677">
    <property type="term" value="F:DNA binding"/>
    <property type="evidence" value="ECO:0007669"/>
    <property type="project" value="UniProtKB-KW"/>
</dbReference>
<dbReference type="GO" id="GO:0000981">
    <property type="term" value="F:DNA-binding transcription factor activity, RNA polymerase II-specific"/>
    <property type="evidence" value="ECO:0000318"/>
    <property type="project" value="GO_Central"/>
</dbReference>
<dbReference type="GO" id="GO:0008270">
    <property type="term" value="F:zinc ion binding"/>
    <property type="evidence" value="ECO:0007669"/>
    <property type="project" value="UniProtKB-KW"/>
</dbReference>
<dbReference type="GO" id="GO:0006357">
    <property type="term" value="P:regulation of transcription by RNA polymerase II"/>
    <property type="evidence" value="ECO:0000318"/>
    <property type="project" value="GO_Central"/>
</dbReference>
<dbReference type="FunFam" id="3.30.160.60:FF:000114">
    <property type="entry name" value="Zinc finger and BTB domain-containing protein 18"/>
    <property type="match status" value="1"/>
</dbReference>
<dbReference type="FunFam" id="3.30.160.60:FF:000220">
    <property type="entry name" value="Zinc finger and BTB domain-containing protein 18"/>
    <property type="match status" value="1"/>
</dbReference>
<dbReference type="FunFam" id="3.30.710.10:FF:000021">
    <property type="entry name" value="Zinc finger and BTB domain-containing protein 18"/>
    <property type="match status" value="1"/>
</dbReference>
<dbReference type="FunFam" id="3.30.160.60:FF:000892">
    <property type="entry name" value="zinc finger and BTB domain-containing protein 3"/>
    <property type="match status" value="1"/>
</dbReference>
<dbReference type="Gene3D" id="3.30.160.60">
    <property type="entry name" value="Classic Zinc Finger"/>
    <property type="match status" value="3"/>
</dbReference>
<dbReference type="Gene3D" id="3.30.710.10">
    <property type="entry name" value="Potassium Channel Kv1.1, Chain A"/>
    <property type="match status" value="1"/>
</dbReference>
<dbReference type="InterPro" id="IPR000210">
    <property type="entry name" value="BTB/POZ_dom"/>
</dbReference>
<dbReference type="InterPro" id="IPR011333">
    <property type="entry name" value="SKP1/BTB/POZ_sf"/>
</dbReference>
<dbReference type="InterPro" id="IPR036236">
    <property type="entry name" value="Znf_C2H2_sf"/>
</dbReference>
<dbReference type="InterPro" id="IPR013087">
    <property type="entry name" value="Znf_C2H2_type"/>
</dbReference>
<dbReference type="PANTHER" id="PTHR24394:SF18">
    <property type="entry name" value="ZINC FINGER AND BTB DOMAIN-CONTAINING PROTEIN 18"/>
    <property type="match status" value="1"/>
</dbReference>
<dbReference type="PANTHER" id="PTHR24394">
    <property type="entry name" value="ZINC FINGER PROTEIN"/>
    <property type="match status" value="1"/>
</dbReference>
<dbReference type="Pfam" id="PF00651">
    <property type="entry name" value="BTB"/>
    <property type="match status" value="1"/>
</dbReference>
<dbReference type="Pfam" id="PF00096">
    <property type="entry name" value="zf-C2H2"/>
    <property type="match status" value="3"/>
</dbReference>
<dbReference type="Pfam" id="PF13894">
    <property type="entry name" value="zf-C2H2_4"/>
    <property type="match status" value="1"/>
</dbReference>
<dbReference type="SMART" id="SM00225">
    <property type="entry name" value="BTB"/>
    <property type="match status" value="1"/>
</dbReference>
<dbReference type="SMART" id="SM00355">
    <property type="entry name" value="ZnF_C2H2"/>
    <property type="match status" value="4"/>
</dbReference>
<dbReference type="SUPFAM" id="SSF57667">
    <property type="entry name" value="beta-beta-alpha zinc fingers"/>
    <property type="match status" value="3"/>
</dbReference>
<dbReference type="SUPFAM" id="SSF54695">
    <property type="entry name" value="POZ domain"/>
    <property type="match status" value="1"/>
</dbReference>
<dbReference type="PROSITE" id="PS50097">
    <property type="entry name" value="BTB"/>
    <property type="match status" value="1"/>
</dbReference>
<dbReference type="PROSITE" id="PS00028">
    <property type="entry name" value="ZINC_FINGER_C2H2_1"/>
    <property type="match status" value="4"/>
</dbReference>
<dbReference type="PROSITE" id="PS50157">
    <property type="entry name" value="ZINC_FINGER_C2H2_2"/>
    <property type="match status" value="4"/>
</dbReference>
<feature type="chain" id="PRO_0000391926" description="Zinc finger and BTB domain-containing protein 18">
    <location>
        <begin position="1"/>
        <end position="520"/>
    </location>
</feature>
<feature type="domain" description="BTB" evidence="2">
    <location>
        <begin position="24"/>
        <end position="91"/>
    </location>
</feature>
<feature type="zinc finger region" description="C2H2-type 1" evidence="3">
    <location>
        <begin position="368"/>
        <end position="390"/>
    </location>
</feature>
<feature type="zinc finger region" description="C2H2-type 2" evidence="3">
    <location>
        <begin position="408"/>
        <end position="430"/>
    </location>
</feature>
<feature type="zinc finger region" description="C2H2-type 3" evidence="3">
    <location>
        <begin position="436"/>
        <end position="458"/>
    </location>
</feature>
<feature type="zinc finger region" description="C2H2-type 4" evidence="3">
    <location>
        <begin position="464"/>
        <end position="487"/>
    </location>
</feature>
<feature type="region of interest" description="Disordered" evidence="4">
    <location>
        <begin position="121"/>
        <end position="140"/>
    </location>
</feature>